<comment type="function">
    <text evidence="1">Exerts its effect at some terminal stage of cytochrome c oxidase synthesis, probably by being involved in the insertion of the copper B into subunit I.</text>
</comment>
<comment type="subcellular location">
    <subcellularLocation>
        <location evidence="1">Cell inner membrane</location>
        <topology evidence="1">Single-pass type II membrane protein</topology>
        <orientation evidence="1">Periplasmic side</orientation>
    </subcellularLocation>
</comment>
<comment type="similarity">
    <text evidence="1">Belongs to the COX11/CtaG family.</text>
</comment>
<gene>
    <name evidence="1" type="primary">ctaG</name>
    <name type="ordered locus">NGR_c05270</name>
</gene>
<name>COXZ_SINFN</name>
<dbReference type="EMBL" id="CP001389">
    <property type="protein sequence ID" value="ACP24323.1"/>
    <property type="molecule type" value="Genomic_DNA"/>
</dbReference>
<dbReference type="RefSeq" id="WP_012707108.1">
    <property type="nucleotide sequence ID" value="NC_012587.1"/>
</dbReference>
<dbReference type="RefSeq" id="YP_002825076.1">
    <property type="nucleotide sequence ID" value="NC_012587.1"/>
</dbReference>
<dbReference type="SMR" id="C3MHJ5"/>
<dbReference type="STRING" id="394.NGR_c05270"/>
<dbReference type="KEGG" id="rhi:NGR_c05270"/>
<dbReference type="PATRIC" id="fig|394.7.peg.3340"/>
<dbReference type="eggNOG" id="COG3175">
    <property type="taxonomic scope" value="Bacteria"/>
</dbReference>
<dbReference type="HOGENOM" id="CLU_045000_5_0_5"/>
<dbReference type="OrthoDB" id="9804841at2"/>
<dbReference type="Proteomes" id="UP000001054">
    <property type="component" value="Chromosome"/>
</dbReference>
<dbReference type="GO" id="GO:0005886">
    <property type="term" value="C:plasma membrane"/>
    <property type="evidence" value="ECO:0007669"/>
    <property type="project" value="UniProtKB-SubCell"/>
</dbReference>
<dbReference type="GO" id="GO:0005507">
    <property type="term" value="F:copper ion binding"/>
    <property type="evidence" value="ECO:0007669"/>
    <property type="project" value="InterPro"/>
</dbReference>
<dbReference type="GO" id="GO:0008535">
    <property type="term" value="P:respiratory chain complex IV assembly"/>
    <property type="evidence" value="ECO:0007669"/>
    <property type="project" value="UniProtKB-UniRule"/>
</dbReference>
<dbReference type="FunFam" id="2.60.370.10:FF:000001">
    <property type="entry name" value="COX11 cytochrome c oxidase assembly homolog"/>
    <property type="match status" value="1"/>
</dbReference>
<dbReference type="Gene3D" id="2.60.370.10">
    <property type="entry name" value="Ctag/Cox11"/>
    <property type="match status" value="1"/>
</dbReference>
<dbReference type="HAMAP" id="MF_00155">
    <property type="entry name" value="CtaG"/>
    <property type="match status" value="1"/>
</dbReference>
<dbReference type="InterPro" id="IPR023471">
    <property type="entry name" value="CtaG/Cox11_dom_sf"/>
</dbReference>
<dbReference type="InterPro" id="IPR007533">
    <property type="entry name" value="Cyt_c_oxidase_assmbl_CtaG"/>
</dbReference>
<dbReference type="NCBIfam" id="NF003465">
    <property type="entry name" value="PRK05089.1"/>
    <property type="match status" value="1"/>
</dbReference>
<dbReference type="PANTHER" id="PTHR21320:SF3">
    <property type="entry name" value="CYTOCHROME C OXIDASE ASSEMBLY PROTEIN COX11, MITOCHONDRIAL-RELATED"/>
    <property type="match status" value="1"/>
</dbReference>
<dbReference type="PANTHER" id="PTHR21320">
    <property type="entry name" value="CYTOCHROME C OXIDASE ASSEMBLY PROTEIN COX11-RELATED"/>
    <property type="match status" value="1"/>
</dbReference>
<dbReference type="Pfam" id="PF04442">
    <property type="entry name" value="CtaG_Cox11"/>
    <property type="match status" value="1"/>
</dbReference>
<dbReference type="PIRSF" id="PIRSF005413">
    <property type="entry name" value="COX11"/>
    <property type="match status" value="1"/>
</dbReference>
<dbReference type="SUPFAM" id="SSF110111">
    <property type="entry name" value="Ctag/Cox11"/>
    <property type="match status" value="1"/>
</dbReference>
<sequence>MTNTPQTPPKERANGVIVGACLAFVAGMVGMAYAAVPLYDMFCRVTGYNGTTQRVEQASDVILDEKIKVTFDANVGPGLAWDFKPVQRDIDVRIGETVQVMYRAKNLSSKPATGQATFNVTPMAAGAYFNKVQCFCFTETTLQPGEEMEMPVVFFVDPEIVKPVETKDIKTLTLSYTFYPREPSKPIAAVKDGETENRL</sequence>
<feature type="chain" id="PRO_1000123362" description="Cytochrome c oxidase assembly protein CtaG">
    <location>
        <begin position="1"/>
        <end position="199"/>
    </location>
</feature>
<feature type="topological domain" description="Cytoplasmic" evidence="1">
    <location>
        <begin position="1"/>
        <end position="12"/>
    </location>
</feature>
<feature type="transmembrane region" description="Helical; Signal-anchor for type II membrane protein" evidence="1">
    <location>
        <begin position="13"/>
        <end position="35"/>
    </location>
</feature>
<feature type="topological domain" description="Periplasmic" evidence="1">
    <location>
        <begin position="36"/>
        <end position="199"/>
    </location>
</feature>
<keyword id="KW-0997">Cell inner membrane</keyword>
<keyword id="KW-1003">Cell membrane</keyword>
<keyword id="KW-0186">Copper</keyword>
<keyword id="KW-0472">Membrane</keyword>
<keyword id="KW-1185">Reference proteome</keyword>
<keyword id="KW-0735">Signal-anchor</keyword>
<keyword id="KW-0812">Transmembrane</keyword>
<keyword id="KW-1133">Transmembrane helix</keyword>
<accession>C3MHJ5</accession>
<proteinExistence type="inferred from homology"/>
<protein>
    <recommendedName>
        <fullName evidence="1">Cytochrome c oxidase assembly protein CtaG</fullName>
    </recommendedName>
</protein>
<reference key="1">
    <citation type="journal article" date="2009" name="Appl. Environ. Microbiol.">
        <title>Rhizobium sp. strain NGR234 possesses a remarkable number of secretion systems.</title>
        <authorList>
            <person name="Schmeisser C."/>
            <person name="Liesegang H."/>
            <person name="Krysciak D."/>
            <person name="Bakkou N."/>
            <person name="Le Quere A."/>
            <person name="Wollherr A."/>
            <person name="Heinemeyer I."/>
            <person name="Morgenstern B."/>
            <person name="Pommerening-Roeser A."/>
            <person name="Flores M."/>
            <person name="Palacios R."/>
            <person name="Brenner S."/>
            <person name="Gottschalk G."/>
            <person name="Schmitz R.A."/>
            <person name="Broughton W.J."/>
            <person name="Perret X."/>
            <person name="Strittmatter A.W."/>
            <person name="Streit W.R."/>
        </authorList>
    </citation>
    <scope>NUCLEOTIDE SEQUENCE [LARGE SCALE GENOMIC DNA]</scope>
    <source>
        <strain>NBRC 101917 / NGR234</strain>
    </source>
</reference>
<organism>
    <name type="scientific">Sinorhizobium fredii (strain NBRC 101917 / NGR234)</name>
    <dbReference type="NCBI Taxonomy" id="394"/>
    <lineage>
        <taxon>Bacteria</taxon>
        <taxon>Pseudomonadati</taxon>
        <taxon>Pseudomonadota</taxon>
        <taxon>Alphaproteobacteria</taxon>
        <taxon>Hyphomicrobiales</taxon>
        <taxon>Rhizobiaceae</taxon>
        <taxon>Sinorhizobium/Ensifer group</taxon>
        <taxon>Sinorhizobium</taxon>
    </lineage>
</organism>
<evidence type="ECO:0000255" key="1">
    <source>
        <dbReference type="HAMAP-Rule" id="MF_00155"/>
    </source>
</evidence>